<sequence length="825" mass="93130">MDVSLCPAKCSFWRIFLLGSVWLDYVGSVLACPANCVCSKTEINCRRPDDGNLFPLLEGQDSGNSNGNASINITDISRNITSIHIENWRGLHTLNAVDMELYTGLQKLTIKNSGLRSIQPRAFAKNPHLRYINLSSNRLTTLSWQLFQTLSLRELRLEQNFFNCSCDIRWMQLWQEQGEAKLNSQSLYCISADGSQLPLFRMNISQCDLPEISVSHVNLTVREGDNAVVTCNGSGSPLPDVDWIVTGLQSINTHQTNLNWTNVHAINLTLVNVTSEDNGFTLTCIAENVVGMSNASVALTVHYPPRVVSLEEPELRLEHCIEFVVRGNPPPTLHWLHNGQPLRESKITHVEYYQEGEVSEGCLLFNKPTHYNNGNYTLNRQEPLGTANQTINGHFLKEPFPESTDNFVSFYEVSPTPPITVTHKPEEDTFGVSIAVGLAAFACVLLVVLFIMINKYGRRSKFGMKGPVAVISGEEDSASPLHHDQPWHHHTLITGRRAGHSVIGMTRIPVIENPQYFRQGHNCHKPDTYVQHIKRRDIVLKRELGEGAFGKVFLAECYNLSPTKVKMLVAVKALKDPTLAARKDFQREAELLTNLQHEHIVKFYGVCGDGDPLIMVFEYMKHGDLNKFLRAHGPDAMILVDGQPRQAKGELGLSQMLHIASQICSGMVYLASQHFVHRDLATRNCLVGANLLVKIGDFGMSRDVYSTDYYRVGGHTMLPIRWMPPESIMYRKFTTESDVWSFGVILWEIFTYGKQPWFQLSNTEVIECITQGRVLERPRVCPKEVYDVMLGCWQREPQQRLNIKEIYKILHALGKATPIYLDILG</sequence>
<protein>
    <recommendedName>
        <fullName>NT-3 growth factor receptor</fullName>
        <ecNumber>2.7.10.1</ecNumber>
    </recommendedName>
    <alternativeName>
        <fullName>GP145-TrkC</fullName>
        <shortName>Trk-C</shortName>
    </alternativeName>
    <alternativeName>
        <fullName>Neurotrophic tyrosine kinase receptor type 3</fullName>
    </alternativeName>
    <alternativeName>
        <fullName>TrkC tyrosine kinase</fullName>
    </alternativeName>
</protein>
<feature type="signal peptide" evidence="1">
    <location>
        <begin position="1"/>
        <end position="31"/>
    </location>
</feature>
<feature type="chain" id="PRO_0000016734" description="NT-3 growth factor receptor">
    <location>
        <begin position="32"/>
        <end position="825"/>
    </location>
</feature>
<feature type="topological domain" description="Extracellular" evidence="6">
    <location>
        <begin position="32"/>
        <end position="429"/>
    </location>
</feature>
<feature type="transmembrane region" description="Helical" evidence="6">
    <location>
        <begin position="430"/>
        <end position="453"/>
    </location>
</feature>
<feature type="topological domain" description="Cytoplasmic" evidence="6">
    <location>
        <begin position="454"/>
        <end position="825"/>
    </location>
</feature>
<feature type="repeat" description="LRR 1">
    <location>
        <begin position="104"/>
        <end position="125"/>
    </location>
</feature>
<feature type="repeat" description="LRR 2">
    <location>
        <begin position="128"/>
        <end position="149"/>
    </location>
</feature>
<feature type="domain" description="LRRCT">
    <location>
        <begin position="160"/>
        <end position="209"/>
    </location>
</feature>
<feature type="domain" description="Ig-like C2-type 1">
    <location>
        <begin position="210"/>
        <end position="300"/>
    </location>
</feature>
<feature type="domain" description="Ig-like C2-type 2">
    <location>
        <begin position="309"/>
        <end position="382"/>
    </location>
</feature>
<feature type="domain" description="Protein kinase" evidence="8">
    <location>
        <begin position="538"/>
        <end position="814"/>
    </location>
</feature>
<feature type="active site" description="Proton acceptor" evidence="8 9">
    <location>
        <position position="679"/>
    </location>
</feature>
<feature type="binding site" evidence="8">
    <location>
        <begin position="544"/>
        <end position="552"/>
    </location>
    <ligand>
        <name>ATP</name>
        <dbReference type="ChEBI" id="CHEBI:30616"/>
    </ligand>
</feature>
<feature type="binding site" evidence="8">
    <location>
        <position position="572"/>
    </location>
    <ligand>
        <name>ATP</name>
        <dbReference type="ChEBI" id="CHEBI:30616"/>
    </ligand>
</feature>
<feature type="site" description="Interaction with SHC1" evidence="1">
    <location>
        <position position="516"/>
    </location>
</feature>
<feature type="site" description="Interaction with PLC-gamma-1" evidence="1">
    <location>
        <position position="820"/>
    </location>
</feature>
<feature type="modified residue" description="Phosphotyrosine; by autocatalysis" evidence="4">
    <location>
        <position position="516"/>
    </location>
</feature>
<feature type="modified residue" description="Phosphotyrosine; by autocatalysis" evidence="1">
    <location>
        <position position="705"/>
    </location>
</feature>
<feature type="modified residue" description="Phosphotyrosine; by autocatalysis" evidence="1">
    <location>
        <position position="709"/>
    </location>
</feature>
<feature type="modified residue" description="Phosphotyrosine; by autocatalysis" evidence="1">
    <location>
        <position position="710"/>
    </location>
</feature>
<feature type="modified residue" description="Phosphotyrosine; by autocatalysis" evidence="1">
    <location>
        <position position="820"/>
    </location>
</feature>
<feature type="glycosylation site" description="N-linked (GlcNAc...) asparagine" evidence="6">
    <location>
        <position position="68"/>
    </location>
</feature>
<feature type="glycosylation site" description="N-linked (GlcNAc...) asparagine" evidence="6">
    <location>
        <position position="72"/>
    </location>
</feature>
<feature type="glycosylation site" description="N-linked (GlcNAc...) asparagine" evidence="6">
    <location>
        <position position="79"/>
    </location>
</feature>
<feature type="glycosylation site" description="N-linked (GlcNAc...) asparagine" evidence="6">
    <location>
        <position position="133"/>
    </location>
</feature>
<feature type="glycosylation site" description="N-linked (GlcNAc...) asparagine" evidence="6">
    <location>
        <position position="163"/>
    </location>
</feature>
<feature type="glycosylation site" description="N-linked (GlcNAc...) asparagine" evidence="6">
    <location>
        <position position="203"/>
    </location>
</feature>
<feature type="glycosylation site" description="N-linked (GlcNAc...) asparagine" evidence="6">
    <location>
        <position position="218"/>
    </location>
</feature>
<feature type="glycosylation site" description="N-linked (GlcNAc...) asparagine" evidence="6">
    <location>
        <position position="232"/>
    </location>
</feature>
<feature type="glycosylation site" description="N-linked (GlcNAc...) asparagine" evidence="6">
    <location>
        <position position="259"/>
    </location>
</feature>
<feature type="glycosylation site" description="N-linked (GlcNAc...) asparagine" evidence="6">
    <location>
        <position position="267"/>
    </location>
</feature>
<feature type="glycosylation site" description="N-linked (GlcNAc...) asparagine" evidence="6">
    <location>
        <position position="272"/>
    </location>
</feature>
<feature type="glycosylation site" description="N-linked (GlcNAc...) asparagine" evidence="6">
    <location>
        <position position="294"/>
    </location>
</feature>
<feature type="glycosylation site" description="N-linked (GlcNAc...) asparagine" evidence="6">
    <location>
        <position position="375"/>
    </location>
</feature>
<feature type="glycosylation site" description="N-linked (GlcNAc...) asparagine" evidence="6">
    <location>
        <position position="388"/>
    </location>
</feature>
<feature type="disulfide bond" evidence="5">
    <location>
        <begin position="32"/>
        <end position="38"/>
    </location>
</feature>
<feature type="disulfide bond" evidence="5">
    <location>
        <begin position="36"/>
        <end position="45"/>
    </location>
</feature>
<feature type="disulfide bond" evidence="5">
    <location>
        <begin position="164"/>
        <end position="189"/>
    </location>
</feature>
<feature type="disulfide bond" evidence="5">
    <location>
        <begin position="166"/>
        <end position="207"/>
    </location>
</feature>
<feature type="disulfide bond" evidence="5">
    <location>
        <begin position="231"/>
        <end position="284"/>
    </location>
</feature>
<feature type="disulfide bond" evidence="7">
    <location>
        <begin position="320"/>
        <end position="362"/>
    </location>
</feature>
<dbReference type="EC" id="2.7.10.1"/>
<dbReference type="EMBL" id="M80800">
    <property type="protein sequence ID" value="AAA31130.1"/>
    <property type="molecule type" value="mRNA"/>
</dbReference>
<dbReference type="PIR" id="A40026">
    <property type="entry name" value="A40026"/>
</dbReference>
<dbReference type="RefSeq" id="NP_999436.1">
    <property type="nucleotide sequence ID" value="NM_214271.1"/>
</dbReference>
<dbReference type="SMR" id="P24786"/>
<dbReference type="IntAct" id="P24786">
    <property type="interactions" value="1"/>
</dbReference>
<dbReference type="MINT" id="P24786"/>
<dbReference type="STRING" id="9823.ENSSSCP00000072174"/>
<dbReference type="GlyCosmos" id="P24786">
    <property type="glycosylation" value="14 sites, No reported glycans"/>
</dbReference>
<dbReference type="GlyGen" id="P24786">
    <property type="glycosylation" value="15 sites"/>
</dbReference>
<dbReference type="PaxDb" id="9823-ENSSSCP00000005487"/>
<dbReference type="GeneID" id="397511"/>
<dbReference type="KEGG" id="ssc:397511"/>
<dbReference type="CTD" id="4916"/>
<dbReference type="eggNOG" id="KOG1026">
    <property type="taxonomic scope" value="Eukaryota"/>
</dbReference>
<dbReference type="InParanoid" id="P24786"/>
<dbReference type="OrthoDB" id="10005095at2759"/>
<dbReference type="BRENDA" id="2.7.10.1">
    <property type="organism ID" value="6170"/>
</dbReference>
<dbReference type="Proteomes" id="UP000008227">
    <property type="component" value="Unplaced"/>
</dbReference>
<dbReference type="Proteomes" id="UP000314985">
    <property type="component" value="Unplaced"/>
</dbReference>
<dbReference type="Proteomes" id="UP000694570">
    <property type="component" value="Unplaced"/>
</dbReference>
<dbReference type="Proteomes" id="UP000694571">
    <property type="component" value="Unplaced"/>
</dbReference>
<dbReference type="Proteomes" id="UP000694720">
    <property type="component" value="Unplaced"/>
</dbReference>
<dbReference type="Proteomes" id="UP000694722">
    <property type="component" value="Unplaced"/>
</dbReference>
<dbReference type="Proteomes" id="UP000694723">
    <property type="component" value="Unplaced"/>
</dbReference>
<dbReference type="Proteomes" id="UP000694724">
    <property type="component" value="Unplaced"/>
</dbReference>
<dbReference type="Proteomes" id="UP000694725">
    <property type="component" value="Unplaced"/>
</dbReference>
<dbReference type="Proteomes" id="UP000694726">
    <property type="component" value="Unplaced"/>
</dbReference>
<dbReference type="Proteomes" id="UP000694727">
    <property type="component" value="Unplaced"/>
</dbReference>
<dbReference type="Proteomes" id="UP000694728">
    <property type="component" value="Unplaced"/>
</dbReference>
<dbReference type="GO" id="GO:0030424">
    <property type="term" value="C:axon"/>
    <property type="evidence" value="ECO:0000318"/>
    <property type="project" value="GO_Central"/>
</dbReference>
<dbReference type="GO" id="GO:0005886">
    <property type="term" value="C:plasma membrane"/>
    <property type="evidence" value="ECO:0000318"/>
    <property type="project" value="GO_Central"/>
</dbReference>
<dbReference type="GO" id="GO:0043235">
    <property type="term" value="C:receptor complex"/>
    <property type="evidence" value="ECO:0000318"/>
    <property type="project" value="GO_Central"/>
</dbReference>
<dbReference type="GO" id="GO:0005524">
    <property type="term" value="F:ATP binding"/>
    <property type="evidence" value="ECO:0007669"/>
    <property type="project" value="UniProtKB-KW"/>
</dbReference>
<dbReference type="GO" id="GO:0043121">
    <property type="term" value="F:neurotrophin binding"/>
    <property type="evidence" value="ECO:0000318"/>
    <property type="project" value="GO_Central"/>
</dbReference>
<dbReference type="GO" id="GO:0005030">
    <property type="term" value="F:neurotrophin receptor activity"/>
    <property type="evidence" value="ECO:0000318"/>
    <property type="project" value="GO_Central"/>
</dbReference>
<dbReference type="GO" id="GO:0004714">
    <property type="term" value="F:transmembrane receptor protein tyrosine kinase activity"/>
    <property type="evidence" value="ECO:0000318"/>
    <property type="project" value="GO_Central"/>
</dbReference>
<dbReference type="GO" id="GO:0030154">
    <property type="term" value="P:cell differentiation"/>
    <property type="evidence" value="ECO:0007669"/>
    <property type="project" value="UniProtKB-KW"/>
</dbReference>
<dbReference type="GO" id="GO:0007169">
    <property type="term" value="P:cell surface receptor protein tyrosine kinase signaling pathway"/>
    <property type="evidence" value="ECO:0000318"/>
    <property type="project" value="GO_Central"/>
</dbReference>
<dbReference type="GO" id="GO:1990090">
    <property type="term" value="P:cellular response to nerve growth factor stimulus"/>
    <property type="evidence" value="ECO:0000318"/>
    <property type="project" value="GO_Central"/>
</dbReference>
<dbReference type="GO" id="GO:0007507">
    <property type="term" value="P:heart development"/>
    <property type="evidence" value="ECO:0000250"/>
    <property type="project" value="UniProtKB"/>
</dbReference>
<dbReference type="GO" id="GO:0007399">
    <property type="term" value="P:nervous system development"/>
    <property type="evidence" value="ECO:0007669"/>
    <property type="project" value="UniProtKB-KW"/>
</dbReference>
<dbReference type="GO" id="GO:0010976">
    <property type="term" value="P:positive regulation of neuron projection development"/>
    <property type="evidence" value="ECO:0000318"/>
    <property type="project" value="GO_Central"/>
</dbReference>
<dbReference type="GO" id="GO:0051897">
    <property type="term" value="P:positive regulation of phosphatidylinositol 3-kinase/protein kinase B signal transduction"/>
    <property type="evidence" value="ECO:0000318"/>
    <property type="project" value="GO_Central"/>
</dbReference>
<dbReference type="CDD" id="cd04971">
    <property type="entry name" value="IgI_TrKABC_d5"/>
    <property type="match status" value="1"/>
</dbReference>
<dbReference type="CDD" id="cd05094">
    <property type="entry name" value="PTKc_TrkC"/>
    <property type="match status" value="1"/>
</dbReference>
<dbReference type="FunFam" id="1.10.510.10:FF:000701">
    <property type="entry name" value="Tyrosine-protein kinase receptor"/>
    <property type="match status" value="1"/>
</dbReference>
<dbReference type="FunFam" id="2.60.40.10:FF:000251">
    <property type="entry name" value="Tyrosine-protein kinase receptor"/>
    <property type="match status" value="1"/>
</dbReference>
<dbReference type="FunFam" id="2.60.40.10:FF:000265">
    <property type="entry name" value="Tyrosine-protein kinase receptor"/>
    <property type="match status" value="1"/>
</dbReference>
<dbReference type="FunFam" id="3.30.200.20:FF:000033">
    <property type="entry name" value="Tyrosine-protein kinase receptor"/>
    <property type="match status" value="1"/>
</dbReference>
<dbReference type="FunFam" id="3.80.10.10:FF:000035">
    <property type="entry name" value="Tyrosine-protein kinase receptor"/>
    <property type="match status" value="1"/>
</dbReference>
<dbReference type="Gene3D" id="2.60.40.10">
    <property type="entry name" value="Immunoglobulins"/>
    <property type="match status" value="2"/>
</dbReference>
<dbReference type="Gene3D" id="3.30.200.20">
    <property type="entry name" value="Phosphorylase Kinase, domain 1"/>
    <property type="match status" value="1"/>
</dbReference>
<dbReference type="Gene3D" id="3.80.10.10">
    <property type="entry name" value="Ribonuclease Inhibitor"/>
    <property type="match status" value="1"/>
</dbReference>
<dbReference type="Gene3D" id="1.10.510.10">
    <property type="entry name" value="Transferase(Phosphotransferase) domain 1"/>
    <property type="match status" value="1"/>
</dbReference>
<dbReference type="InterPro" id="IPR000483">
    <property type="entry name" value="Cys-rich_flank_reg_C"/>
</dbReference>
<dbReference type="InterPro" id="IPR007110">
    <property type="entry name" value="Ig-like_dom"/>
</dbReference>
<dbReference type="InterPro" id="IPR036179">
    <property type="entry name" value="Ig-like_dom_sf"/>
</dbReference>
<dbReference type="InterPro" id="IPR013783">
    <property type="entry name" value="Ig-like_fold"/>
</dbReference>
<dbReference type="InterPro" id="IPR003599">
    <property type="entry name" value="Ig_sub"/>
</dbReference>
<dbReference type="InterPro" id="IPR013151">
    <property type="entry name" value="Immunoglobulin_dom"/>
</dbReference>
<dbReference type="InterPro" id="IPR011009">
    <property type="entry name" value="Kinase-like_dom_sf"/>
</dbReference>
<dbReference type="InterPro" id="IPR001611">
    <property type="entry name" value="Leu-rich_rpt"/>
</dbReference>
<dbReference type="InterPro" id="IPR032675">
    <property type="entry name" value="LRR_dom_sf"/>
</dbReference>
<dbReference type="InterPro" id="IPR000372">
    <property type="entry name" value="LRRNT"/>
</dbReference>
<dbReference type="InterPro" id="IPR020777">
    <property type="entry name" value="NTRK"/>
</dbReference>
<dbReference type="InterPro" id="IPR020446">
    <property type="entry name" value="NTRK3"/>
</dbReference>
<dbReference type="InterPro" id="IPR031635">
    <property type="entry name" value="NTRK_LRRCT"/>
</dbReference>
<dbReference type="InterPro" id="IPR000719">
    <property type="entry name" value="Prot_kinase_dom"/>
</dbReference>
<dbReference type="InterPro" id="IPR017441">
    <property type="entry name" value="Protein_kinase_ATP_BS"/>
</dbReference>
<dbReference type="InterPro" id="IPR050122">
    <property type="entry name" value="RTK"/>
</dbReference>
<dbReference type="InterPro" id="IPR001245">
    <property type="entry name" value="Ser-Thr/Tyr_kinase_cat_dom"/>
</dbReference>
<dbReference type="InterPro" id="IPR008266">
    <property type="entry name" value="Tyr_kinase_AS"/>
</dbReference>
<dbReference type="InterPro" id="IPR020635">
    <property type="entry name" value="Tyr_kinase_cat_dom"/>
</dbReference>
<dbReference type="InterPro" id="IPR002011">
    <property type="entry name" value="Tyr_kinase_rcpt_2_CS"/>
</dbReference>
<dbReference type="PANTHER" id="PTHR24416:SF66">
    <property type="entry name" value="NT-3 GROWTH FACTOR RECEPTOR"/>
    <property type="match status" value="1"/>
</dbReference>
<dbReference type="PANTHER" id="PTHR24416">
    <property type="entry name" value="TYROSINE-PROTEIN KINASE RECEPTOR"/>
    <property type="match status" value="1"/>
</dbReference>
<dbReference type="Pfam" id="PF00047">
    <property type="entry name" value="ig"/>
    <property type="match status" value="1"/>
</dbReference>
<dbReference type="Pfam" id="PF13855">
    <property type="entry name" value="LRR_8"/>
    <property type="match status" value="1"/>
</dbReference>
<dbReference type="Pfam" id="PF16920">
    <property type="entry name" value="LRRCT_2"/>
    <property type="match status" value="1"/>
</dbReference>
<dbReference type="Pfam" id="PF01462">
    <property type="entry name" value="LRRNT"/>
    <property type="match status" value="1"/>
</dbReference>
<dbReference type="Pfam" id="PF07714">
    <property type="entry name" value="PK_Tyr_Ser-Thr"/>
    <property type="match status" value="1"/>
</dbReference>
<dbReference type="PRINTS" id="PR01939">
    <property type="entry name" value="NTKRECEPTOR"/>
</dbReference>
<dbReference type="PRINTS" id="PR01942">
    <property type="entry name" value="NTKRECEPTOR3"/>
</dbReference>
<dbReference type="PRINTS" id="PR00109">
    <property type="entry name" value="TYRKINASE"/>
</dbReference>
<dbReference type="SMART" id="SM00409">
    <property type="entry name" value="IG"/>
    <property type="match status" value="1"/>
</dbReference>
<dbReference type="SMART" id="SM00082">
    <property type="entry name" value="LRRCT"/>
    <property type="match status" value="1"/>
</dbReference>
<dbReference type="SMART" id="SM00013">
    <property type="entry name" value="LRRNT"/>
    <property type="match status" value="1"/>
</dbReference>
<dbReference type="SMART" id="SM00219">
    <property type="entry name" value="TyrKc"/>
    <property type="match status" value="1"/>
</dbReference>
<dbReference type="SUPFAM" id="SSF48726">
    <property type="entry name" value="Immunoglobulin"/>
    <property type="match status" value="2"/>
</dbReference>
<dbReference type="SUPFAM" id="SSF52058">
    <property type="entry name" value="L domain-like"/>
    <property type="match status" value="1"/>
</dbReference>
<dbReference type="SUPFAM" id="SSF56112">
    <property type="entry name" value="Protein kinase-like (PK-like)"/>
    <property type="match status" value="1"/>
</dbReference>
<dbReference type="PROSITE" id="PS50835">
    <property type="entry name" value="IG_LIKE"/>
    <property type="match status" value="1"/>
</dbReference>
<dbReference type="PROSITE" id="PS51450">
    <property type="entry name" value="LRR"/>
    <property type="match status" value="1"/>
</dbReference>
<dbReference type="PROSITE" id="PS00107">
    <property type="entry name" value="PROTEIN_KINASE_ATP"/>
    <property type="match status" value="1"/>
</dbReference>
<dbReference type="PROSITE" id="PS50011">
    <property type="entry name" value="PROTEIN_KINASE_DOM"/>
    <property type="match status" value="1"/>
</dbReference>
<dbReference type="PROSITE" id="PS00109">
    <property type="entry name" value="PROTEIN_KINASE_TYR"/>
    <property type="match status" value="1"/>
</dbReference>
<dbReference type="PROSITE" id="PS00239">
    <property type="entry name" value="RECEPTOR_TYR_KIN_II"/>
    <property type="match status" value="1"/>
</dbReference>
<accession>P24786</accession>
<comment type="function">
    <text evidence="4">Receptor tyrosine kinase involved in nervous system and probably heart development. Upon binding of its ligand NTF3/neurotrophin-3, NTRK3 autophosphorylates and activates different signaling pathways, including the phosphatidylinositol 3-kinase/AKT and the MAPK pathways, that control cell survival and differentiation.</text>
</comment>
<comment type="catalytic activity">
    <reaction evidence="9">
        <text>L-tyrosyl-[protein] + ATP = O-phospho-L-tyrosyl-[protein] + ADP + H(+)</text>
        <dbReference type="Rhea" id="RHEA:10596"/>
        <dbReference type="Rhea" id="RHEA-COMP:10136"/>
        <dbReference type="Rhea" id="RHEA-COMP:20101"/>
        <dbReference type="ChEBI" id="CHEBI:15378"/>
        <dbReference type="ChEBI" id="CHEBI:30616"/>
        <dbReference type="ChEBI" id="CHEBI:46858"/>
        <dbReference type="ChEBI" id="CHEBI:61978"/>
        <dbReference type="ChEBI" id="CHEBI:456216"/>
        <dbReference type="EC" id="2.7.10.1"/>
    </reaction>
</comment>
<comment type="subunit">
    <text evidence="2 3">Exists in a dynamic equilibrium between monomeric (low affinity) and dimeric (high affinity) structures (By similarity). Binds SH2B2. Interacts with SQSTM1 and KIDINS220. Interacts with PTPRS (By similarity). Interacts with MAPK8IP3/JIP3 (By similarity).</text>
</comment>
<comment type="subcellular location">
    <subcellularLocation>
        <location>Membrane</location>
        <topology>Single-pass type I membrane protein</topology>
    </subcellularLocation>
</comment>
<comment type="tissue specificity">
    <text>Preferentially in the brain, low levels in the ovaries.</text>
</comment>
<comment type="PTM">
    <text>Ligand-mediated auto-phosphorylation.</text>
</comment>
<comment type="similarity">
    <text evidence="8">Belongs to the protein kinase superfamily. Tyr protein kinase family. Insulin receptor subfamily.</text>
</comment>
<gene>
    <name type="primary">NTRK3</name>
    <name type="synonym">TRKC</name>
</gene>
<evidence type="ECO:0000250" key="1"/>
<evidence type="ECO:0000250" key="2">
    <source>
        <dbReference type="UniProtKB" id="P04629"/>
    </source>
</evidence>
<evidence type="ECO:0000250" key="3">
    <source>
        <dbReference type="UniProtKB" id="Q03351"/>
    </source>
</evidence>
<evidence type="ECO:0000250" key="4">
    <source>
        <dbReference type="UniProtKB" id="Q16288"/>
    </source>
</evidence>
<evidence type="ECO:0000250" key="5">
    <source>
        <dbReference type="UniProtKB" id="Q91044"/>
    </source>
</evidence>
<evidence type="ECO:0000255" key="6"/>
<evidence type="ECO:0000255" key="7">
    <source>
        <dbReference type="PROSITE-ProRule" id="PRU00114"/>
    </source>
</evidence>
<evidence type="ECO:0000255" key="8">
    <source>
        <dbReference type="PROSITE-ProRule" id="PRU00159"/>
    </source>
</evidence>
<evidence type="ECO:0000255" key="9">
    <source>
        <dbReference type="PROSITE-ProRule" id="PRU10028"/>
    </source>
</evidence>
<organism>
    <name type="scientific">Sus scrofa</name>
    <name type="common">Pig</name>
    <dbReference type="NCBI Taxonomy" id="9823"/>
    <lineage>
        <taxon>Eukaryota</taxon>
        <taxon>Metazoa</taxon>
        <taxon>Chordata</taxon>
        <taxon>Craniata</taxon>
        <taxon>Vertebrata</taxon>
        <taxon>Euteleostomi</taxon>
        <taxon>Mammalia</taxon>
        <taxon>Eutheria</taxon>
        <taxon>Laurasiatheria</taxon>
        <taxon>Artiodactyla</taxon>
        <taxon>Suina</taxon>
        <taxon>Suidae</taxon>
        <taxon>Sus</taxon>
    </lineage>
</organism>
<proteinExistence type="evidence at transcript level"/>
<name>NTRK3_PIG</name>
<keyword id="KW-0067">ATP-binding</keyword>
<keyword id="KW-0217">Developmental protein</keyword>
<keyword id="KW-0221">Differentiation</keyword>
<keyword id="KW-1015">Disulfide bond</keyword>
<keyword id="KW-0325">Glycoprotein</keyword>
<keyword id="KW-0393">Immunoglobulin domain</keyword>
<keyword id="KW-0418">Kinase</keyword>
<keyword id="KW-0433">Leucine-rich repeat</keyword>
<keyword id="KW-0472">Membrane</keyword>
<keyword id="KW-0524">Neurogenesis</keyword>
<keyword id="KW-0547">Nucleotide-binding</keyword>
<keyword id="KW-0597">Phosphoprotein</keyword>
<keyword id="KW-0675">Receptor</keyword>
<keyword id="KW-1185">Reference proteome</keyword>
<keyword id="KW-0677">Repeat</keyword>
<keyword id="KW-0732">Signal</keyword>
<keyword id="KW-0808">Transferase</keyword>
<keyword id="KW-0812">Transmembrane</keyword>
<keyword id="KW-1133">Transmembrane helix</keyword>
<keyword id="KW-0829">Tyrosine-protein kinase</keyword>
<reference key="1">
    <citation type="journal article" date="1991" name="Cell">
        <title>trkC, a new member of the trk family of tyrosine protein kinases, is a receptor for neurotrophin-3.</title>
        <authorList>
            <person name="Lamballe F."/>
            <person name="Klein R."/>
            <person name="Barbacid M."/>
        </authorList>
    </citation>
    <scope>NUCLEOTIDE SEQUENCE [MRNA]</scope>
    <source>
        <tissue>Brain</tissue>
    </source>
</reference>